<dbReference type="EMBL" id="U22396">
    <property type="protein sequence ID" value="AAA64848.1"/>
    <property type="molecule type" value="mRNA"/>
</dbReference>
<dbReference type="EMBL" id="U14556">
    <property type="protein sequence ID" value="AAA85493.1"/>
    <property type="molecule type" value="mRNA"/>
</dbReference>
<dbReference type="EMBL" id="AL670285">
    <property type="status" value="NOT_ANNOTATED_CDS"/>
    <property type="molecule type" value="Genomic_DNA"/>
</dbReference>
<dbReference type="EMBL" id="CH466615">
    <property type="protein sequence ID" value="EDL13378.1"/>
    <property type="molecule type" value="Genomic_DNA"/>
</dbReference>
<dbReference type="CCDS" id="CCDS18875.1"/>
<dbReference type="PIR" id="S59069">
    <property type="entry name" value="S59069"/>
</dbReference>
<dbReference type="RefSeq" id="NP_001365757.1">
    <property type="nucleotide sequence ID" value="NM_001378828.1"/>
</dbReference>
<dbReference type="RefSeq" id="NP_033567.2">
    <property type="nucleotide sequence ID" value="NM_009541.2"/>
</dbReference>
<dbReference type="SMR" id="Q60821"/>
<dbReference type="BioGRID" id="204631">
    <property type="interactions" value="31"/>
</dbReference>
<dbReference type="CORUM" id="Q60821"/>
<dbReference type="DIP" id="DIP-48690N"/>
<dbReference type="FunCoup" id="Q60821">
    <property type="interactions" value="1023"/>
</dbReference>
<dbReference type="IntAct" id="Q60821">
    <property type="interactions" value="1"/>
</dbReference>
<dbReference type="STRING" id="10090.ENSMUSP00000006377"/>
<dbReference type="iPTMnet" id="Q60821"/>
<dbReference type="PhosphoSitePlus" id="Q60821"/>
<dbReference type="PaxDb" id="10090-ENSMUSP00000006377"/>
<dbReference type="ProteomicsDB" id="302038"/>
<dbReference type="Pumba" id="Q60821"/>
<dbReference type="Antibodypedia" id="904">
    <property type="antibodies" value="153 antibodies from 25 providers"/>
</dbReference>
<dbReference type="DNASU" id="22642"/>
<dbReference type="Ensembl" id="ENSMUST00000006377.13">
    <property type="protein sequence ID" value="ENSMUSP00000006377.7"/>
    <property type="gene ID" value="ENSMUSG00000006215.13"/>
</dbReference>
<dbReference type="GeneID" id="22642"/>
<dbReference type="KEGG" id="mmu:22642"/>
<dbReference type="UCSC" id="uc008vol.2">
    <property type="organism name" value="mouse"/>
</dbReference>
<dbReference type="AGR" id="MGI:107410"/>
<dbReference type="CTD" id="7709"/>
<dbReference type="MGI" id="MGI:107410">
    <property type="gene designation" value="Zbtb17"/>
</dbReference>
<dbReference type="VEuPathDB" id="HostDB:ENSMUSG00000006215"/>
<dbReference type="eggNOG" id="KOG1721">
    <property type="taxonomic scope" value="Eukaryota"/>
</dbReference>
<dbReference type="GeneTree" id="ENSGT00940000159957"/>
<dbReference type="HOGENOM" id="CLU_002678_30_1_1"/>
<dbReference type="InParanoid" id="Q60821"/>
<dbReference type="OMA" id="DKGHKCP"/>
<dbReference type="OrthoDB" id="10018191at2759"/>
<dbReference type="PhylomeDB" id="Q60821"/>
<dbReference type="TreeFam" id="TF332047"/>
<dbReference type="BioGRID-ORCS" id="22642">
    <property type="hits" value="12 hits in 79 CRISPR screens"/>
</dbReference>
<dbReference type="ChiTaRS" id="Zbtb17">
    <property type="organism name" value="mouse"/>
</dbReference>
<dbReference type="PRO" id="PR:Q60821"/>
<dbReference type="Proteomes" id="UP000000589">
    <property type="component" value="Chromosome 4"/>
</dbReference>
<dbReference type="RNAct" id="Q60821">
    <property type="molecule type" value="protein"/>
</dbReference>
<dbReference type="Bgee" id="ENSMUSG00000006215">
    <property type="expression patterns" value="Expressed in saccule of membranous labyrinth and 268 other cell types or tissues"/>
</dbReference>
<dbReference type="GO" id="GO:0005634">
    <property type="term" value="C:nucleus"/>
    <property type="evidence" value="ECO:0000314"/>
    <property type="project" value="MGI"/>
</dbReference>
<dbReference type="GO" id="GO:0032993">
    <property type="term" value="C:protein-DNA complex"/>
    <property type="evidence" value="ECO:0007669"/>
    <property type="project" value="Ensembl"/>
</dbReference>
<dbReference type="GO" id="GO:0001046">
    <property type="term" value="F:core promoter sequence-specific DNA binding"/>
    <property type="evidence" value="ECO:0007669"/>
    <property type="project" value="Ensembl"/>
</dbReference>
<dbReference type="GO" id="GO:0003677">
    <property type="term" value="F:DNA binding"/>
    <property type="evidence" value="ECO:0000314"/>
    <property type="project" value="MGI"/>
</dbReference>
<dbReference type="GO" id="GO:0001228">
    <property type="term" value="F:DNA-binding transcription activator activity, RNA polymerase II-specific"/>
    <property type="evidence" value="ECO:0007669"/>
    <property type="project" value="Ensembl"/>
</dbReference>
<dbReference type="GO" id="GO:0140297">
    <property type="term" value="F:DNA-binding transcription factor binding"/>
    <property type="evidence" value="ECO:0007669"/>
    <property type="project" value="Ensembl"/>
</dbReference>
<dbReference type="GO" id="GO:0000978">
    <property type="term" value="F:RNA polymerase II cis-regulatory region sequence-specific DNA binding"/>
    <property type="evidence" value="ECO:0007669"/>
    <property type="project" value="Ensembl"/>
</dbReference>
<dbReference type="GO" id="GO:0001223">
    <property type="term" value="F:transcription coactivator binding"/>
    <property type="evidence" value="ECO:0007669"/>
    <property type="project" value="Ensembl"/>
</dbReference>
<dbReference type="GO" id="GO:0008270">
    <property type="term" value="F:zinc ion binding"/>
    <property type="evidence" value="ECO:0007669"/>
    <property type="project" value="UniProtKB-KW"/>
</dbReference>
<dbReference type="GO" id="GO:0007398">
    <property type="term" value="P:ectoderm development"/>
    <property type="evidence" value="ECO:0000315"/>
    <property type="project" value="MGI"/>
</dbReference>
<dbReference type="GO" id="GO:0070314">
    <property type="term" value="P:G1 to G0 transition"/>
    <property type="evidence" value="ECO:0007669"/>
    <property type="project" value="Ensembl"/>
</dbReference>
<dbReference type="GO" id="GO:0001702">
    <property type="term" value="P:gastrulation with mouth forming second"/>
    <property type="evidence" value="ECO:0000315"/>
    <property type="project" value="MGI"/>
</dbReference>
<dbReference type="GO" id="GO:0008285">
    <property type="term" value="P:negative regulation of cell population proliferation"/>
    <property type="evidence" value="ECO:0007669"/>
    <property type="project" value="Ensembl"/>
</dbReference>
<dbReference type="GO" id="GO:0045893">
    <property type="term" value="P:positive regulation of DNA-templated transcription"/>
    <property type="evidence" value="ECO:0000314"/>
    <property type="project" value="MGI"/>
</dbReference>
<dbReference type="CDD" id="cd18206">
    <property type="entry name" value="BTB_POZ_ZBTB17_MIZ1"/>
    <property type="match status" value="1"/>
</dbReference>
<dbReference type="FunFam" id="3.30.160.60:FF:004080">
    <property type="match status" value="1"/>
</dbReference>
<dbReference type="FunFam" id="3.30.160.60:FF:005277">
    <property type="match status" value="1"/>
</dbReference>
<dbReference type="FunFam" id="3.30.160.60:FF:001485">
    <property type="entry name" value="Krueppel-related zinc finger protein"/>
    <property type="match status" value="1"/>
</dbReference>
<dbReference type="FunFam" id="3.30.160.60:FF:000831">
    <property type="entry name" value="Zinc finger and BTB domain-containing protein 17"/>
    <property type="match status" value="1"/>
</dbReference>
<dbReference type="FunFam" id="3.30.710.10:FF:000048">
    <property type="entry name" value="zinc finger and BTB domain-containing protein 17"/>
    <property type="match status" value="1"/>
</dbReference>
<dbReference type="FunFam" id="3.30.160.60:FF:001021">
    <property type="entry name" value="zinc finger and BTB domain-containing protein 17 isoform X1"/>
    <property type="match status" value="1"/>
</dbReference>
<dbReference type="FunFam" id="3.30.160.60:FF:001022">
    <property type="entry name" value="zinc finger and BTB domain-containing protein 17 isoform X1"/>
    <property type="match status" value="1"/>
</dbReference>
<dbReference type="FunFam" id="3.30.160.60:FF:001032">
    <property type="entry name" value="zinc finger and BTB domain-containing protein 17 isoform X1"/>
    <property type="match status" value="1"/>
</dbReference>
<dbReference type="FunFam" id="3.30.160.60:FF:000225">
    <property type="entry name" value="zinc finger and BTB domain-containing protein 17 isoform X2"/>
    <property type="match status" value="3"/>
</dbReference>
<dbReference type="FunFam" id="3.30.160.60:FF:000346">
    <property type="entry name" value="zinc finger and BTB domain-containing protein 17 isoform X2"/>
    <property type="match status" value="1"/>
</dbReference>
<dbReference type="FunFam" id="3.30.160.60:FF:000446">
    <property type="entry name" value="Zinc finger protein"/>
    <property type="match status" value="1"/>
</dbReference>
<dbReference type="Gene3D" id="3.30.160.60">
    <property type="entry name" value="Classic Zinc Finger"/>
    <property type="match status" value="13"/>
</dbReference>
<dbReference type="Gene3D" id="3.30.710.10">
    <property type="entry name" value="Potassium Channel Kv1.1, Chain A"/>
    <property type="match status" value="1"/>
</dbReference>
<dbReference type="InterPro" id="IPR000210">
    <property type="entry name" value="BTB/POZ_dom"/>
</dbReference>
<dbReference type="InterPro" id="IPR011333">
    <property type="entry name" value="SKP1/BTB/POZ_sf"/>
</dbReference>
<dbReference type="InterPro" id="IPR036236">
    <property type="entry name" value="Znf_C2H2_sf"/>
</dbReference>
<dbReference type="InterPro" id="IPR013087">
    <property type="entry name" value="Znf_C2H2_type"/>
</dbReference>
<dbReference type="PANTHER" id="PTHR24399">
    <property type="entry name" value="ZINC FINGER AND BTB DOMAIN-CONTAINING"/>
    <property type="match status" value="1"/>
</dbReference>
<dbReference type="PANTHER" id="PTHR24399:SF8">
    <property type="entry name" value="ZINC FINGER AND BTB DOMAIN-CONTAINING PROTEIN 17"/>
    <property type="match status" value="1"/>
</dbReference>
<dbReference type="Pfam" id="PF00651">
    <property type="entry name" value="BTB"/>
    <property type="match status" value="1"/>
</dbReference>
<dbReference type="Pfam" id="PF00096">
    <property type="entry name" value="zf-C2H2"/>
    <property type="match status" value="10"/>
</dbReference>
<dbReference type="SMART" id="SM00225">
    <property type="entry name" value="BTB"/>
    <property type="match status" value="1"/>
</dbReference>
<dbReference type="SMART" id="SM00355">
    <property type="entry name" value="ZnF_C2H2"/>
    <property type="match status" value="13"/>
</dbReference>
<dbReference type="SUPFAM" id="SSF57667">
    <property type="entry name" value="beta-beta-alpha zinc fingers"/>
    <property type="match status" value="9"/>
</dbReference>
<dbReference type="SUPFAM" id="SSF54695">
    <property type="entry name" value="POZ domain"/>
    <property type="match status" value="1"/>
</dbReference>
<dbReference type="PROSITE" id="PS50097">
    <property type="entry name" value="BTB"/>
    <property type="match status" value="1"/>
</dbReference>
<dbReference type="PROSITE" id="PS00028">
    <property type="entry name" value="ZINC_FINGER_C2H2_1"/>
    <property type="match status" value="13"/>
</dbReference>
<dbReference type="PROSITE" id="PS50157">
    <property type="entry name" value="ZINC_FINGER_C2H2_2"/>
    <property type="match status" value="13"/>
</dbReference>
<comment type="function">
    <text evidence="2 6 7 8">Transcription factor that can function as an activator or repressor depending on its binding partners, and by targeting negative regulators of cell cycle progression. Has been shown to bind to the promoters of adenovirus major late protein and cyclin D1 and activate transcription. Required for early embryonic development during gastrulation. Plays a critical role in early lymphocyte development, where it is essential to prevent apoptosis in lymphoid precursors, allowing them to survive in response to IL7 and undergo proper lineage commitment. Represses RB1 transcription; this repression can be blocked by interaction with ZBTB49 (By similarity).</text>
</comment>
<comment type="subunit">
    <text evidence="2 7 9">Homooligomerizes (via the BTB/POZ domain), multimerization is required for DNA binding. Binds to the C-terminal helix-loop-helix motif of MYC which inhibits ZBTB17 transactivation and growth arrest activities and renders it insoluble in the nucleus. Also interacts with HCFC1, MAGEA4 and TMPRSS11A. Interacts (via the C-terminal zinc fingers) with GFI1; the interaction results in the recruitment of MYC to the CDKN1A/p21 and CDKN1B promoters and repression of transcription. Interacts with TRAF2, interfering with the binding of UBC13 to TRAF2, and inhibiting TRAF2 E3 ligase activity. Interacts with BCL6; the interaction inhibits ZBTB17 transactivation activity on target genes involved in cell cycle arrest. Interacts with ZBTB49; this interaction blocks ZBTB17-mediated repression of RB1 (By similarity).</text>
</comment>
<comment type="interaction">
    <interactant intactId="EBI-11598394">
        <id>Q60821</id>
    </interactant>
    <interactant intactId="EBI-4289236">
        <id>Q07120</id>
        <label>Gfi1</label>
    </interactant>
    <organismsDiffer>true</organismsDiffer>
    <experiments>3</experiments>
</comment>
<comment type="subcellular location">
    <subcellularLocation>
        <location evidence="1">Nucleus</location>
    </subcellularLocation>
</comment>
<comment type="tissue specificity">
    <text>Found in all the embryonic and adult tissues examined.</text>
</comment>
<comment type="developmental stage">
    <text evidence="6">Expressed ubiquitously from early embryogenesis (6.5 dpc) to organogenesis, predominantly in neural and epithelial tissues.</text>
</comment>
<comment type="PTM">
    <text evidence="9">Undergoes 'Lys-48'-linked polyubiquitination at Lys-388 and Lys-472 and subsequent proteasomal degradation in a TRAF2-dependent manner and upon TNFA stimulation.</text>
</comment>
<comment type="disruption phenotype">
    <text evidence="6">Mice produce inviable embryos which are severely retarded in early development and do not undergo normal gastrulation due to massive apoptosis of ectodermal cells around day 7.5.</text>
</comment>
<comment type="similarity">
    <text evidence="10">Belongs to the krueppel C2H2-type zinc-finger protein family.</text>
</comment>
<accession>Q60821</accession>
<accession>A2ADB9</accession>
<accession>Q60699</accession>
<proteinExistence type="evidence at protein level"/>
<feature type="chain" id="PRO_0000047731" description="Zinc finger and BTB domain-containing protein 17">
    <location>
        <begin position="1"/>
        <end position="794"/>
    </location>
</feature>
<feature type="domain" description="BTB" evidence="3">
    <location>
        <begin position="1"/>
        <end position="104"/>
    </location>
</feature>
<feature type="zinc finger region" description="C2H2-type 1" evidence="4">
    <location>
        <begin position="297"/>
        <end position="319"/>
    </location>
</feature>
<feature type="zinc finger region" description="C2H2-type 2" evidence="4">
    <location>
        <begin position="325"/>
        <end position="347"/>
    </location>
</feature>
<feature type="zinc finger region" description="C2H2-type 3" evidence="4">
    <location>
        <begin position="353"/>
        <end position="375"/>
    </location>
</feature>
<feature type="zinc finger region" description="C2H2-type 4" evidence="4">
    <location>
        <begin position="381"/>
        <end position="403"/>
    </location>
</feature>
<feature type="zinc finger region" description="C2H2-type 5" evidence="4">
    <location>
        <begin position="409"/>
        <end position="431"/>
    </location>
</feature>
<feature type="zinc finger region" description="C2H2-type 6" evidence="4">
    <location>
        <begin position="437"/>
        <end position="459"/>
    </location>
</feature>
<feature type="zinc finger region" description="C2H2-type 7" evidence="4">
    <location>
        <begin position="465"/>
        <end position="487"/>
    </location>
</feature>
<feature type="zinc finger region" description="C2H2-type 8" evidence="4">
    <location>
        <begin position="493"/>
        <end position="515"/>
    </location>
</feature>
<feature type="zinc finger region" description="C2H2-type 9" evidence="4">
    <location>
        <begin position="519"/>
        <end position="543"/>
    </location>
</feature>
<feature type="zinc finger region" description="C2H2-type 10" evidence="4">
    <location>
        <begin position="549"/>
        <end position="571"/>
    </location>
</feature>
<feature type="zinc finger region" description="C2H2-type 11" evidence="4">
    <location>
        <begin position="577"/>
        <end position="599"/>
    </location>
</feature>
<feature type="zinc finger region" description="C2H2-type 12" evidence="4">
    <location>
        <begin position="605"/>
        <end position="628"/>
    </location>
</feature>
<feature type="zinc finger region" description="C2H2-type 13" evidence="4">
    <location>
        <begin position="708"/>
        <end position="730"/>
    </location>
</feature>
<feature type="region of interest" description="Disordered" evidence="5">
    <location>
        <begin position="116"/>
        <end position="285"/>
    </location>
</feature>
<feature type="region of interest" description="Interaction with MYC" evidence="1">
    <location>
        <begin position="260"/>
        <end position="299"/>
    </location>
</feature>
<feature type="region of interest" description="Interaction with HCFC1" evidence="1">
    <location>
        <begin position="628"/>
        <end position="794"/>
    </location>
</feature>
<feature type="region of interest" description="Interaction with MYC" evidence="1">
    <location>
        <begin position="628"/>
        <end position="709"/>
    </location>
</feature>
<feature type="region of interest" description="Disordered" evidence="5">
    <location>
        <begin position="769"/>
        <end position="794"/>
    </location>
</feature>
<feature type="compositionally biased region" description="Basic and acidic residues" evidence="5">
    <location>
        <begin position="132"/>
        <end position="142"/>
    </location>
</feature>
<feature type="compositionally biased region" description="Low complexity" evidence="5">
    <location>
        <begin position="203"/>
        <end position="216"/>
    </location>
</feature>
<feature type="compositionally biased region" description="Basic and acidic residues" evidence="5">
    <location>
        <begin position="243"/>
        <end position="252"/>
    </location>
</feature>
<feature type="compositionally biased region" description="Acidic residues" evidence="5">
    <location>
        <begin position="254"/>
        <end position="263"/>
    </location>
</feature>
<feature type="compositionally biased region" description="Pro residues" evidence="5">
    <location>
        <begin position="784"/>
        <end position="794"/>
    </location>
</feature>
<feature type="cross-link" description="Glycyl lysine isopeptide (Lys-Gly) (interchain with G-Cter in ubiquitin)" evidence="9">
    <location>
        <position position="388"/>
    </location>
</feature>
<feature type="cross-link" description="Glycyl lysine isopeptide (Lys-Gly) (interchain with G-Cter in ubiquitin)" evidence="9">
    <location>
        <position position="472"/>
    </location>
</feature>
<feature type="sequence conflict" description="In Ref. 1; AAA64848 and 2; AAA85493." evidence="10" ref="1 2">
    <original>D</original>
    <variation>G</variation>
    <location>
        <position position="151"/>
    </location>
</feature>
<feature type="sequence conflict" description="In Ref. 1; AAA64848." evidence="10" ref="1">
    <original>A</original>
    <variation>G</variation>
    <location>
        <position position="507"/>
    </location>
</feature>
<feature type="sequence conflict" description="In Ref. 2; AAA85493." evidence="10" ref="2">
    <original>N</original>
    <variation>K</variation>
    <location>
        <position position="573"/>
    </location>
</feature>
<feature type="sequence conflict" description="In Ref. 1; AAA64848 and 2; AAA85493." evidence="10" ref="1 2">
    <original>H</original>
    <variation>D</variation>
    <location>
        <position position="577"/>
    </location>
</feature>
<name>ZBT17_MOUSE</name>
<sequence length="794" mass="86758">MDFPQHSQRVLEQLNQQRQLGLLCDCTFVVDGVDFKAHKAVLAACSEYFKMLFVDQKDVVHLDISNAAGLGQVLEFMYTAKLSLSPENVDDVLAVASFLQMQDIVTACHTLKSLAEPSSTTGESADASAVEGGDKRAKDEKAAATMLSRLDQARGSSSTGPGRELKEERGGQAESASSGAEQTEKADAPREPPPVELKPDPTSSMAAAEAEALSESSEQEMEVEPASKGEDGQEEEGAGPATVKEEGMHLDNGEPPEENEESAGTDSGQELGMEGQNLRSGTYGDRTESKAYGSIIHKCEDCGKEFTHTGNFKRHIRIHTGEKPFSCRECSKAFSDPAACKAHEKTHSPLKPYGCEECGKSYRLISLLNLHKKRHSGEARYRCGDCGKLFTTSGNLKRHQLVHSGQKPYQCDYCGRSFSDPTSKMRHLETHDTDKEHKCPHCDKKFNQVGNLKAHLKIHIADGPLKCRECGKQFTTSGNLKRHLRIHSGEKPYVCTHCQRQFADPGALQRHVRIHTGEKPCQCVICGKAFTQASSLIAHVRQHTGEKPYVCERCGKRFVQSSQLANHIRHHDNIRPHKCSVCSKAFVNVGDLSKHIIIHTGEKPYLCDKCGRGFNRVDNLRSHVKTVHQGKAGIKILEPEEGGEVSVVTVDDMVTLATEALAATAVTQLTVVPVGAAVTADETEVLKAEISKAVKQVQEEDPNTHILYACDSCGDKFLDANSLAQHVRIHTAQALVMFQTDADFYQQYGPGSTWPAGQMLQAGELVFRPRDGTEGQPTLAESPPTAPDCLPPAE</sequence>
<reference key="1">
    <citation type="submission" date="1995-04" db="EMBL/GenBank/DDBJ databases">
        <title>cDNA for polyomavirus late initiator promoter binding protein, LP-1.</title>
        <authorList>
            <person name="Rapp L."/>
            <person name="Carmichael G.G."/>
        </authorList>
    </citation>
    <scope>NUCLEOTIDE SEQUENCE [MRNA]</scope>
</reference>
<reference key="2">
    <citation type="journal article" date="1995" name="Biochem. J.">
        <title>An unusual arrangement of 13 zinc fingers in the vertebrate gene Z13.</title>
        <authorList>
            <person name="Schulz T.C."/>
            <person name="Hopwood B."/>
            <person name="Rathjen P.D."/>
            <person name="Wells J.R.E."/>
        </authorList>
    </citation>
    <scope>NUCLEOTIDE SEQUENCE [MRNA]</scope>
    <source>
        <strain>CBA/J</strain>
        <tissue>Kidney</tissue>
    </source>
</reference>
<reference key="3">
    <citation type="journal article" date="2009" name="PLoS Biol.">
        <title>Lineage-specific biology revealed by a finished genome assembly of the mouse.</title>
        <authorList>
            <person name="Church D.M."/>
            <person name="Goodstadt L."/>
            <person name="Hillier L.W."/>
            <person name="Zody M.C."/>
            <person name="Goldstein S."/>
            <person name="She X."/>
            <person name="Bult C.J."/>
            <person name="Agarwala R."/>
            <person name="Cherry J.L."/>
            <person name="DiCuccio M."/>
            <person name="Hlavina W."/>
            <person name="Kapustin Y."/>
            <person name="Meric P."/>
            <person name="Maglott D."/>
            <person name="Birtle Z."/>
            <person name="Marques A.C."/>
            <person name="Graves T."/>
            <person name="Zhou S."/>
            <person name="Teague B."/>
            <person name="Potamousis K."/>
            <person name="Churas C."/>
            <person name="Place M."/>
            <person name="Herschleb J."/>
            <person name="Runnheim R."/>
            <person name="Forrest D."/>
            <person name="Amos-Landgraf J."/>
            <person name="Schwartz D.C."/>
            <person name="Cheng Z."/>
            <person name="Lindblad-Toh K."/>
            <person name="Eichler E.E."/>
            <person name="Ponting C.P."/>
        </authorList>
    </citation>
    <scope>NUCLEOTIDE SEQUENCE [LARGE SCALE GENOMIC DNA]</scope>
    <source>
        <strain>C57BL/6J</strain>
    </source>
</reference>
<reference key="4">
    <citation type="submission" date="2005-07" db="EMBL/GenBank/DDBJ databases">
        <authorList>
            <person name="Mural R.J."/>
            <person name="Adams M.D."/>
            <person name="Myers E.W."/>
            <person name="Smith H.O."/>
            <person name="Venter J.C."/>
        </authorList>
    </citation>
    <scope>NUCLEOTIDE SEQUENCE [LARGE SCALE GENOMIC DNA]</scope>
</reference>
<reference key="5">
    <citation type="journal article" date="2003" name="Mol. Cell. Biol.">
        <title>Miz1 is required for early embryonic development during gastrulation.</title>
        <authorList>
            <person name="Adhikary S."/>
            <person name="Peukert K."/>
            <person name="Karsunky H."/>
            <person name="Beuger V."/>
            <person name="Lutz W."/>
            <person name="Elsaesser H.-P."/>
            <person name="Moeroey T."/>
            <person name="Eilers M."/>
        </authorList>
    </citation>
    <scope>FUNCTION</scope>
    <scope>DEVELOPMENTAL STAGE</scope>
    <scope>DISRUPTION PHENOTYPE</scope>
</reference>
<reference key="6">
    <citation type="journal article" date="2010" name="Oncogene">
        <title>A role of Miz-1 in Gfi-1-mediated transcriptional repression of CDKN1A.</title>
        <authorList>
            <person name="Liu Q."/>
            <person name="Basu S."/>
            <person name="Qiu Y."/>
            <person name="Tang F."/>
            <person name="Dong F."/>
        </authorList>
    </citation>
    <scope>INTERACTION WITH GFI1</scope>
    <scope>FUNCTION</scope>
</reference>
<reference key="7">
    <citation type="journal article" date="2011" name="Blood">
        <title>IL-7R-dependent survival and differentiation of early T-lineage progenitors is regulated by the BTB/POZ domain transcription factor Miz-1.</title>
        <authorList>
            <person name="Saba I."/>
            <person name="Kosan C."/>
            <person name="Vassen L."/>
            <person name="Moroy T."/>
        </authorList>
    </citation>
    <scope>FUNCTION IN LYMPHOCYTE DEVELOPMENT</scope>
</reference>
<reference key="8">
    <citation type="journal article" date="2012" name="Proc. Natl. Acad. Sci. U.S.A.">
        <title>Site-specific ubiquitination is required for relieving the transcription factor Miz1-mediated suppression on TNF-alpha-induced JNK activation and inflammation.</title>
        <authorList>
            <person name="Liu J."/>
            <person name="Yan J."/>
            <person name="Jiang S."/>
            <person name="Wen J."/>
            <person name="Chen L."/>
            <person name="Zhao Y."/>
            <person name="Lin A."/>
        </authorList>
    </citation>
    <scope>UBIQUITINATION AT LYS-388 AND LYS-472</scope>
    <scope>INTERACTION WITH TRAF2</scope>
</reference>
<gene>
    <name type="primary">Zbtb17</name>
    <name type="synonym">Zfp100</name>
    <name type="synonym">Znf151</name>
</gene>
<evidence type="ECO:0000250" key="1"/>
<evidence type="ECO:0000250" key="2">
    <source>
        <dbReference type="UniProtKB" id="Q13105"/>
    </source>
</evidence>
<evidence type="ECO:0000255" key="3">
    <source>
        <dbReference type="PROSITE-ProRule" id="PRU00037"/>
    </source>
</evidence>
<evidence type="ECO:0000255" key="4">
    <source>
        <dbReference type="PROSITE-ProRule" id="PRU00042"/>
    </source>
</evidence>
<evidence type="ECO:0000256" key="5">
    <source>
        <dbReference type="SAM" id="MobiDB-lite"/>
    </source>
</evidence>
<evidence type="ECO:0000269" key="6">
    <source>
    </source>
</evidence>
<evidence type="ECO:0000269" key="7">
    <source>
    </source>
</evidence>
<evidence type="ECO:0000269" key="8">
    <source>
    </source>
</evidence>
<evidence type="ECO:0000269" key="9">
    <source>
    </source>
</evidence>
<evidence type="ECO:0000305" key="10"/>
<protein>
    <recommendedName>
        <fullName>Zinc finger and BTB domain-containing protein 17</fullName>
    </recommendedName>
    <alternativeName>
        <fullName>LP-1</fullName>
    </alternativeName>
    <alternativeName>
        <fullName>Polyomavirus late initiator promoter-binding protein</fullName>
    </alternativeName>
    <alternativeName>
        <fullName>Zinc finger protein 100</fullName>
        <shortName>Zfp-100</shortName>
    </alternativeName>
    <alternativeName>
        <fullName>Zinc finger protein 151</fullName>
    </alternativeName>
    <alternativeName>
        <fullName>Zinc finger protein Z13</fullName>
    </alternativeName>
</protein>
<organism>
    <name type="scientific">Mus musculus</name>
    <name type="common">Mouse</name>
    <dbReference type="NCBI Taxonomy" id="10090"/>
    <lineage>
        <taxon>Eukaryota</taxon>
        <taxon>Metazoa</taxon>
        <taxon>Chordata</taxon>
        <taxon>Craniata</taxon>
        <taxon>Vertebrata</taxon>
        <taxon>Euteleostomi</taxon>
        <taxon>Mammalia</taxon>
        <taxon>Eutheria</taxon>
        <taxon>Euarchontoglires</taxon>
        <taxon>Glires</taxon>
        <taxon>Rodentia</taxon>
        <taxon>Myomorpha</taxon>
        <taxon>Muroidea</taxon>
        <taxon>Muridae</taxon>
        <taxon>Murinae</taxon>
        <taxon>Mus</taxon>
        <taxon>Mus</taxon>
    </lineage>
</organism>
<keyword id="KW-0217">Developmental protein</keyword>
<keyword id="KW-0238">DNA-binding</keyword>
<keyword id="KW-1017">Isopeptide bond</keyword>
<keyword id="KW-0479">Metal-binding</keyword>
<keyword id="KW-0539">Nucleus</keyword>
<keyword id="KW-1185">Reference proteome</keyword>
<keyword id="KW-0677">Repeat</keyword>
<keyword id="KW-0804">Transcription</keyword>
<keyword id="KW-0805">Transcription regulation</keyword>
<keyword id="KW-0832">Ubl conjugation</keyword>
<keyword id="KW-0862">Zinc</keyword>
<keyword id="KW-0863">Zinc-finger</keyword>